<sequence>MSKSWGKFIEEEEAEMASRRNLMIVDGTNLGFRFKHNNSKKPFASSYVSTIQSLAKSYSARTTIVLGDKGKSVFRLEHLPEYKGNRDEKYAQRTEEEKALDEQFFEYLKDAFELCKTTFPTFTIRGVEADDMAAYIVKLIGHLYDHVWLISTDGDWDTLLTDKVSRFSFTTRREYHLRDMYEHHNVDDVEQFISLKAIMGDLGDNIRGVEGIGAKRGYNIIREFGNVLDIIDQLPLPGKQKYIQNLNASEELLFRNLILVDLPTYCVDAIAAVGQDVLDKFTKDILEIAEQ</sequence>
<accession>P06229</accession>
<accession>Q5DMH3</accession>
<accession>Q66LT5</accession>
<feature type="initiator methionine" description="Removed; by host" evidence="8">
    <location>
        <position position="1"/>
    </location>
</feature>
<feature type="chain" id="PRO_0000165217" description="Flap endonuclease" evidence="1">
    <location>
        <begin position="2"/>
        <end position="291"/>
    </location>
</feature>
<feature type="domain" description="5'-3' exonuclease" evidence="1">
    <location>
        <begin position="190"/>
        <end position="263"/>
    </location>
</feature>
<feature type="region of interest" description="Helical arch" evidence="1 9 18">
    <location>
        <begin position="82"/>
        <end position="116"/>
    </location>
</feature>
<feature type="region of interest" description="DNA-binding; H3TH" evidence="1 9">
    <location>
        <begin position="188"/>
        <end position="224"/>
    </location>
</feature>
<feature type="binding site" evidence="1 2">
    <location>
        <position position="83"/>
    </location>
    <ligand>
        <name>DNA</name>
        <dbReference type="ChEBI" id="CHEBI:16991"/>
    </ligand>
</feature>
<feature type="binding site" evidence="1 9">
    <location>
        <position position="130"/>
    </location>
    <ligand>
        <name>Mg(2+)</name>
        <dbReference type="ChEBI" id="CHEBI:18420"/>
        <label>1</label>
        <note>catalytic</note>
    </ligand>
</feature>
<feature type="binding site" evidence="1 9">
    <location>
        <position position="130"/>
    </location>
    <ligand>
        <name>Mg(2+)</name>
        <dbReference type="ChEBI" id="CHEBI:18420"/>
        <label>2</label>
        <note>catalytic</note>
    </ligand>
</feature>
<feature type="binding site" evidence="1 6 9 10">
    <location>
        <position position="153"/>
    </location>
    <ligand>
        <name>Mg(2+)</name>
        <dbReference type="ChEBI" id="CHEBI:18420"/>
        <label>2</label>
        <note>catalytic</note>
    </ligand>
</feature>
<feature type="binding site" evidence="1 6 9 10">
    <location>
        <position position="155"/>
    </location>
    <ligand>
        <name>Mg(2+)</name>
        <dbReference type="ChEBI" id="CHEBI:18420"/>
        <label>2</label>
        <note>catalytic</note>
    </ligand>
</feature>
<feature type="binding site" evidence="1 9">
    <location>
        <position position="155"/>
    </location>
    <ligand>
        <name>Mg(2+)</name>
        <dbReference type="ChEBI" id="CHEBI:18420"/>
        <label>3</label>
    </ligand>
</feature>
<feature type="binding site" evidence="1 9">
    <location>
        <position position="201"/>
    </location>
    <ligand>
        <name>Mg(2+)</name>
        <dbReference type="ChEBI" id="CHEBI:18420"/>
        <label>3</label>
    </ligand>
</feature>
<feature type="binding site" evidence="1 9">
    <location>
        <position position="209"/>
    </location>
    <ligand>
        <name>K(+)</name>
        <dbReference type="ChEBI" id="CHEBI:29103"/>
    </ligand>
</feature>
<feature type="binding site" evidence="1 9">
    <location>
        <position position="212"/>
    </location>
    <ligand>
        <name>K(+)</name>
        <dbReference type="ChEBI" id="CHEBI:29103"/>
    </ligand>
</feature>
<feature type="mutagenesis site" description="10 fold increase in the dissociation constant for pseudo-Y binding. 3 fold increase in the dissociation constant for 5'overhangs binding." evidence="3">
    <original>R</original>
    <variation>A</variation>
    <location>
        <position position="33"/>
    </location>
</feature>
<feature type="mutagenesis site" description="3.5-fold decrease in binding affinity for DNA. No effect on endonuclease and exonuclease activities." evidence="4">
    <original>Y</original>
    <variation>F</variation>
    <location>
        <position position="82"/>
    </location>
</feature>
<feature type="mutagenesis site" description="No exonuclease activity, retains full endonuclease activity on a flap structure. Binds DNA pseudo-Y substrates with a dissociation constant of 200 nM." evidence="2 12 13">
    <original>K</original>
    <variation>A</variation>
    <location>
        <position position="83"/>
    </location>
</feature>
<feature type="mutagenesis site" description="Complete loss of inhibition by PHMB; when associated with S-266." evidence="11">
    <original>C</original>
    <variation>S</variation>
    <location>
        <position position="115"/>
    </location>
</feature>
<feature type="mutagenesis site" description="Loss of both exo- and endonuclease activity, still binds DNA." evidence="6">
    <original>EAD</original>
    <variation>QAN</variation>
    <location>
        <begin position="128"/>
        <end position="130"/>
    </location>
</feature>
<feature type="mutagenesis site" description="Complete loss of enzymatic activity." evidence="9">
    <original>D</original>
    <variation>K</variation>
    <location>
        <position position="153"/>
    </location>
</feature>
<feature type="mutagenesis site" description="Complete loss of enzymatic activity." evidence="9">
    <original>D</original>
    <variation>K</variation>
    <location>
        <position position="155"/>
    </location>
</feature>
<feature type="mutagenesis site" description="10 fold increase in the dissociation constant for pseudo-Y binding. No effect on 5'overhangs binding." evidence="3">
    <original>R</original>
    <variation>A</variation>
    <location>
        <position position="172"/>
    </location>
</feature>
<feature type="mutagenesis site" description="10% exonuclease activity, little change in endonuclease activity. Binds DNA pseudo-Y substrates with a dissociation constant of 200 nM." evidence="12 13">
    <original>K</original>
    <variation>A</variation>
    <location>
        <position position="196"/>
    </location>
</feature>
<feature type="mutagenesis site" description="Retains most endo- but very little exonuclease activity; binds pseudo-Y substrate more tightly than wt." evidence="6">
    <original>DLGD</original>
    <variation>ILGS</variation>
    <location>
        <begin position="201"/>
        <end position="204"/>
    </location>
</feature>
<feature type="mutagenesis site" description="Retains most endonuclease but complete loss of exonuclease activity; binds pseudo-Y substrate more tightly than wt." evidence="6">
    <original>DLGD</original>
    <variation>RLGP</variation>
    <variation>RLGR</variation>
    <location>
        <begin position="201"/>
        <end position="204"/>
    </location>
</feature>
<feature type="mutagenesis site" description="Wild-type exo- and endonuclease activities. 10 fold increase in the dissociation constant for pseudo-Y binding. Drastic increase in the dissociation constant for 5'overhangs binding." evidence="3 13">
    <original>K</original>
    <variation>A</variation>
    <location>
        <position position="215"/>
    </location>
</feature>
<feature type="mutagenesis site" description="100 fold increase in the dissociation constant for pseudo-Y binding. Drastic increase in the dissociation constant for 5'overhangs binding." evidence="3">
    <original>R</original>
    <variation>A</variation>
    <location>
        <position position="216"/>
    </location>
</feature>
<feature type="mutagenesis site" description="10 fold increase in the dissociation constant for pseudo-Y binding. 10 fold increase in the dissociation constant for 5'overhangs binding." evidence="3">
    <original>K</original>
    <variation>A</variation>
    <location>
        <position position="241"/>
    </location>
</feature>
<feature type="mutagenesis site" description="Complete loss of inhibition by PHMB; when associated with S-115." evidence="11">
    <original>C</original>
    <variation>S</variation>
    <location>
        <position position="266"/>
    </location>
</feature>
<feature type="strand" evidence="27">
    <location>
        <begin position="21"/>
        <end position="26"/>
    </location>
</feature>
<feature type="helix" evidence="27">
    <location>
        <begin position="27"/>
        <end position="31"/>
    </location>
</feature>
<feature type="helix" evidence="27">
    <location>
        <begin position="32"/>
        <end position="34"/>
    </location>
</feature>
<feature type="helix" evidence="27">
    <location>
        <begin position="35"/>
        <end position="40"/>
    </location>
</feature>
<feature type="helix" evidence="27">
    <location>
        <begin position="44"/>
        <end position="57"/>
    </location>
</feature>
<feature type="strand" evidence="27">
    <location>
        <begin position="60"/>
        <end position="66"/>
    </location>
</feature>
<feature type="helix" evidence="27">
    <location>
        <begin position="73"/>
        <end position="78"/>
    </location>
</feature>
<feature type="turn" evidence="27">
    <location>
        <begin position="80"/>
        <end position="83"/>
    </location>
</feature>
<feature type="helix" evidence="27">
    <location>
        <begin position="84"/>
        <end position="91"/>
    </location>
</feature>
<feature type="helix" evidence="27">
    <location>
        <begin position="95"/>
        <end position="118"/>
    </location>
</feature>
<feature type="helix" evidence="27">
    <location>
        <begin position="129"/>
        <end position="140"/>
    </location>
</feature>
<feature type="helix" evidence="27">
    <location>
        <begin position="141"/>
        <end position="143"/>
    </location>
</feature>
<feature type="strand" evidence="27">
    <location>
        <begin position="147"/>
        <end position="150"/>
    </location>
</feature>
<feature type="helix" evidence="27">
    <location>
        <begin position="154"/>
        <end position="159"/>
    </location>
</feature>
<feature type="strand" evidence="27">
    <location>
        <begin position="164"/>
        <end position="167"/>
    </location>
</feature>
<feature type="turn" evidence="27">
    <location>
        <begin position="169"/>
        <end position="171"/>
    </location>
</feature>
<feature type="strand" evidence="26">
    <location>
        <begin position="173"/>
        <end position="175"/>
    </location>
</feature>
<feature type="helix" evidence="27">
    <location>
        <begin position="177"/>
        <end position="179"/>
    </location>
</feature>
<feature type="helix" evidence="27">
    <location>
        <begin position="180"/>
        <end position="184"/>
    </location>
</feature>
<feature type="strand" evidence="27">
    <location>
        <begin position="185"/>
        <end position="188"/>
    </location>
</feature>
<feature type="helix" evidence="27">
    <location>
        <begin position="189"/>
        <end position="199"/>
    </location>
</feature>
<feature type="helix" evidence="27">
    <location>
        <begin position="202"/>
        <end position="204"/>
    </location>
</feature>
<feature type="helix" evidence="27">
    <location>
        <begin position="214"/>
        <end position="224"/>
    </location>
</feature>
<feature type="helix" evidence="27">
    <location>
        <begin position="227"/>
        <end position="233"/>
    </location>
</feature>
<feature type="helix" evidence="27">
    <location>
        <begin position="241"/>
        <end position="247"/>
    </location>
</feature>
<feature type="helix" evidence="27">
    <location>
        <begin position="250"/>
        <end position="260"/>
    </location>
</feature>
<feature type="helix" evidence="27">
    <location>
        <begin position="262"/>
        <end position="271"/>
    </location>
</feature>
<feature type="helix" evidence="27">
    <location>
        <begin position="275"/>
        <end position="289"/>
    </location>
</feature>
<evidence type="ECO:0000255" key="1">
    <source>
        <dbReference type="HAMAP-Rule" id="MF_04140"/>
    </source>
</evidence>
<evidence type="ECO:0000269" key="2">
    <source>
    </source>
</evidence>
<evidence type="ECO:0000269" key="3">
    <source>
    </source>
</evidence>
<evidence type="ECO:0000269" key="4">
    <source>
    </source>
</evidence>
<evidence type="ECO:0000269" key="5">
    <source>
    </source>
</evidence>
<evidence type="ECO:0000269" key="6">
    <source>
    </source>
</evidence>
<evidence type="ECO:0000269" key="7">
    <source>
    </source>
</evidence>
<evidence type="ECO:0000269" key="8">
    <source>
    </source>
</evidence>
<evidence type="ECO:0000269" key="9">
    <source>
    </source>
</evidence>
<evidence type="ECO:0000269" key="10">
    <source>
    </source>
</evidence>
<evidence type="ECO:0000269" key="11">
    <source>
    </source>
</evidence>
<evidence type="ECO:0000269" key="12">
    <source>
    </source>
</evidence>
<evidence type="ECO:0000269" key="13">
    <source>
    </source>
</evidence>
<evidence type="ECO:0000303" key="14">
    <source>
    </source>
</evidence>
<evidence type="ECO:0000303" key="15">
    <source>
    </source>
</evidence>
<evidence type="ECO:0000305" key="16"/>
<evidence type="ECO:0000305" key="17">
    <source>
    </source>
</evidence>
<evidence type="ECO:0000305" key="18">
    <source>
    </source>
</evidence>
<evidence type="ECO:0000312" key="19">
    <source>
        <dbReference type="EMBL" id="AAS77176.1"/>
    </source>
</evidence>
<evidence type="ECO:0000312" key="20">
    <source>
        <dbReference type="EMBL" id="AAU05267.1"/>
    </source>
</evidence>
<evidence type="ECO:0000312" key="21">
    <source>
        <dbReference type="EMBL" id="AAX12058.1"/>
    </source>
</evidence>
<evidence type="ECO:0007744" key="22">
    <source>
        <dbReference type="PDB" id="5HML"/>
    </source>
</evidence>
<evidence type="ECO:0007744" key="23">
    <source>
        <dbReference type="PDB" id="5HMM"/>
    </source>
</evidence>
<evidence type="ECO:0007744" key="24">
    <source>
        <dbReference type="PDB" id="5HNK"/>
    </source>
</evidence>
<evidence type="ECO:0007744" key="25">
    <source>
        <dbReference type="PDB" id="5HP4"/>
    </source>
</evidence>
<evidence type="ECO:0007829" key="26">
    <source>
        <dbReference type="PDB" id="1EXN"/>
    </source>
</evidence>
<evidence type="ECO:0007829" key="27">
    <source>
        <dbReference type="PDB" id="5HML"/>
    </source>
</evidence>
<proteinExistence type="evidence at protein level"/>
<dbReference type="EC" id="3.1.11.-" evidence="1 2 7 9 12"/>
<dbReference type="EC" id="3.1.11.3" evidence="1 2 7 8 9 11 12"/>
<dbReference type="EMBL" id="AY543070">
    <property type="protein sequence ID" value="AAS77176.1"/>
    <property type="molecule type" value="Genomic_DNA"/>
</dbReference>
<dbReference type="EMBL" id="AY587007">
    <property type="protein sequence ID" value="AAX12058.1"/>
    <property type="status" value="ALT_INIT"/>
    <property type="molecule type" value="Genomic_DNA"/>
</dbReference>
<dbReference type="EMBL" id="AY692264">
    <property type="protein sequence ID" value="AAU05267.1"/>
    <property type="molecule type" value="Genomic_DNA"/>
</dbReference>
<dbReference type="PIR" id="A23610">
    <property type="entry name" value="NCBPT5"/>
</dbReference>
<dbReference type="RefSeq" id="YP_006958.1">
    <property type="nucleotide sequence ID" value="NC_005859.1"/>
</dbReference>
<dbReference type="PDB" id="1EXN">
    <property type="method" value="X-ray"/>
    <property type="resolution" value="2.50 A"/>
    <property type="chains" value="A/B=2-291"/>
</dbReference>
<dbReference type="PDB" id="1UT5">
    <property type="method" value="X-ray"/>
    <property type="resolution" value="2.75 A"/>
    <property type="chains" value="A/B=2-291"/>
</dbReference>
<dbReference type="PDB" id="1UT8">
    <property type="method" value="X-ray"/>
    <property type="resolution" value="2.75 A"/>
    <property type="chains" value="A/B=2-291"/>
</dbReference>
<dbReference type="PDB" id="1XO1">
    <property type="method" value="X-ray"/>
    <property type="resolution" value="2.50 A"/>
    <property type="chains" value="A/B=1-291"/>
</dbReference>
<dbReference type="PDB" id="5HML">
    <property type="method" value="X-ray"/>
    <property type="resolution" value="1.48 A"/>
    <property type="chains" value="A/B=20-291"/>
</dbReference>
<dbReference type="PDB" id="5HMM">
    <property type="method" value="X-ray"/>
    <property type="resolution" value="1.50 A"/>
    <property type="chains" value="A/B=20-290"/>
</dbReference>
<dbReference type="PDB" id="5HNK">
    <property type="method" value="X-ray"/>
    <property type="resolution" value="2.22 A"/>
    <property type="chains" value="A/B=20-291"/>
</dbReference>
<dbReference type="PDB" id="5HP4">
    <property type="method" value="X-ray"/>
    <property type="resolution" value="1.86 A"/>
    <property type="chains" value="A=20-291"/>
</dbReference>
<dbReference type="PDBsum" id="1EXN"/>
<dbReference type="PDBsum" id="1UT5"/>
<dbReference type="PDBsum" id="1UT8"/>
<dbReference type="PDBsum" id="1XO1"/>
<dbReference type="PDBsum" id="5HML"/>
<dbReference type="PDBsum" id="5HMM"/>
<dbReference type="PDBsum" id="5HNK"/>
<dbReference type="PDBsum" id="5HP4"/>
<dbReference type="SMR" id="P06229"/>
<dbReference type="GeneID" id="2777611"/>
<dbReference type="KEGG" id="vg:2777611"/>
<dbReference type="EvolutionaryTrace" id="P06229"/>
<dbReference type="Proteomes" id="UP000002107">
    <property type="component" value="Genome"/>
</dbReference>
<dbReference type="Proteomes" id="UP000002141">
    <property type="component" value="Segment"/>
</dbReference>
<dbReference type="Proteomes" id="UP000002503">
    <property type="component" value="Segment"/>
</dbReference>
<dbReference type="GO" id="GO:0019034">
    <property type="term" value="C:viral replication complex"/>
    <property type="evidence" value="ECO:0000315"/>
    <property type="project" value="CACAO"/>
</dbReference>
<dbReference type="GO" id="GO:0035312">
    <property type="term" value="F:5'-3' DNA exonuclease activity"/>
    <property type="evidence" value="ECO:0000315"/>
    <property type="project" value="CACAO"/>
</dbReference>
<dbReference type="GO" id="GO:0008409">
    <property type="term" value="F:5'-3' exonuclease activity"/>
    <property type="evidence" value="ECO:0000314"/>
    <property type="project" value="UniProtKB"/>
</dbReference>
<dbReference type="GO" id="GO:0017108">
    <property type="term" value="F:5'-flap endonuclease activity"/>
    <property type="evidence" value="ECO:0000314"/>
    <property type="project" value="UniProtKB"/>
</dbReference>
<dbReference type="GO" id="GO:0003677">
    <property type="term" value="F:DNA binding"/>
    <property type="evidence" value="ECO:0007669"/>
    <property type="project" value="UniProtKB-UniRule"/>
</dbReference>
<dbReference type="GO" id="GO:0004529">
    <property type="term" value="F:DNA exonuclease activity"/>
    <property type="evidence" value="ECO:0000314"/>
    <property type="project" value="UniProtKB"/>
</dbReference>
<dbReference type="GO" id="GO:0051908">
    <property type="term" value="F:double-stranded DNA 5'-3' DNA exonuclease activity"/>
    <property type="evidence" value="ECO:0007669"/>
    <property type="project" value="UniProtKB-EC"/>
</dbReference>
<dbReference type="GO" id="GO:1990238">
    <property type="term" value="F:double-stranded DNA endonuclease activity"/>
    <property type="evidence" value="ECO:0000314"/>
    <property type="project" value="CACAO"/>
</dbReference>
<dbReference type="GO" id="GO:0046872">
    <property type="term" value="F:metal ion binding"/>
    <property type="evidence" value="ECO:0007669"/>
    <property type="project" value="UniProtKB-UniRule"/>
</dbReference>
<dbReference type="GO" id="GO:0033567">
    <property type="term" value="P:DNA replication, Okazaki fragment processing"/>
    <property type="evidence" value="ECO:0007669"/>
    <property type="project" value="UniProtKB-UniRule"/>
</dbReference>
<dbReference type="GO" id="GO:0019086">
    <property type="term" value="P:late viral transcription"/>
    <property type="evidence" value="ECO:0000315"/>
    <property type="project" value="CACAO"/>
</dbReference>
<dbReference type="GO" id="GO:0039693">
    <property type="term" value="P:viral DNA genome replication"/>
    <property type="evidence" value="ECO:0007669"/>
    <property type="project" value="UniProtKB-UniRule"/>
</dbReference>
<dbReference type="CDD" id="cd09899">
    <property type="entry name" value="H3TH_T4-like"/>
    <property type="match status" value="1"/>
</dbReference>
<dbReference type="CDD" id="cd00008">
    <property type="entry name" value="PIN_53EXO-like"/>
    <property type="match status" value="1"/>
</dbReference>
<dbReference type="FunFam" id="3.40.50.1010:FF:000034">
    <property type="entry name" value="Ribonuclease H"/>
    <property type="match status" value="1"/>
</dbReference>
<dbReference type="FunFam" id="1.10.150.20:FF:000053">
    <property type="entry name" value="T5 flap endonuclease"/>
    <property type="match status" value="1"/>
</dbReference>
<dbReference type="Gene3D" id="1.10.150.20">
    <property type="entry name" value="5' to 3' exonuclease, C-terminal subdomain"/>
    <property type="match status" value="1"/>
</dbReference>
<dbReference type="Gene3D" id="3.40.50.1010">
    <property type="entry name" value="5'-nuclease"/>
    <property type="match status" value="1"/>
</dbReference>
<dbReference type="HAMAP" id="MF_04140">
    <property type="entry name" value="FEN_T5"/>
    <property type="match status" value="1"/>
</dbReference>
<dbReference type="InterPro" id="IPR020046">
    <property type="entry name" value="5-3_exonucl_a-hlix_arch_N"/>
</dbReference>
<dbReference type="InterPro" id="IPR002421">
    <property type="entry name" value="5-3_exonuclease"/>
</dbReference>
<dbReference type="InterPro" id="IPR036279">
    <property type="entry name" value="5-3_exonuclease_C_sf"/>
</dbReference>
<dbReference type="InterPro" id="IPR020045">
    <property type="entry name" value="DNA_polI_H3TH"/>
</dbReference>
<dbReference type="InterPro" id="IPR038969">
    <property type="entry name" value="FEN"/>
</dbReference>
<dbReference type="InterPro" id="IPR043666">
    <property type="entry name" value="FEN_D15-like"/>
</dbReference>
<dbReference type="InterPro" id="IPR008918">
    <property type="entry name" value="HhH2"/>
</dbReference>
<dbReference type="InterPro" id="IPR029060">
    <property type="entry name" value="PIN-like_dom_sf"/>
</dbReference>
<dbReference type="PANTHER" id="PTHR42646:SF2">
    <property type="entry name" value="5'-3' EXONUCLEASE FAMILY PROTEIN"/>
    <property type="match status" value="1"/>
</dbReference>
<dbReference type="PANTHER" id="PTHR42646">
    <property type="entry name" value="FLAP ENDONUCLEASE XNI"/>
    <property type="match status" value="1"/>
</dbReference>
<dbReference type="Pfam" id="PF01367">
    <property type="entry name" value="5_3_exonuc"/>
    <property type="match status" value="1"/>
</dbReference>
<dbReference type="Pfam" id="PF02739">
    <property type="entry name" value="5_3_exonuc_N"/>
    <property type="match status" value="1"/>
</dbReference>
<dbReference type="SMART" id="SM00475">
    <property type="entry name" value="53EXOc"/>
    <property type="match status" value="1"/>
</dbReference>
<dbReference type="SMART" id="SM00279">
    <property type="entry name" value="HhH2"/>
    <property type="match status" value="1"/>
</dbReference>
<dbReference type="SUPFAM" id="SSF47807">
    <property type="entry name" value="5' to 3' exonuclease, C-terminal subdomain"/>
    <property type="match status" value="1"/>
</dbReference>
<dbReference type="SUPFAM" id="SSF88723">
    <property type="entry name" value="PIN domain-like"/>
    <property type="match status" value="1"/>
</dbReference>
<keyword id="KW-0002">3D-structure</keyword>
<keyword id="KW-0903">Direct protein sequencing</keyword>
<keyword id="KW-0235">DNA replication</keyword>
<keyword id="KW-0238">DNA-binding</keyword>
<keyword id="KW-0244">Early protein</keyword>
<keyword id="KW-0255">Endonuclease</keyword>
<keyword id="KW-0269">Exonuclease</keyword>
<keyword id="KW-0378">Hydrolase</keyword>
<keyword id="KW-0460">Magnesium</keyword>
<keyword id="KW-0479">Metal-binding</keyword>
<keyword id="KW-0540">Nuclease</keyword>
<keyword id="KW-0630">Potassium</keyword>
<keyword id="KW-1185">Reference proteome</keyword>
<keyword id="KW-1194">Viral DNA replication</keyword>
<reference key="1">
    <citation type="journal article" date="1986" name="FEBS Lett.">
        <title>Cloning and DNA sequence of the 5'-exonuclease gene of bacteriophage T5.</title>
        <authorList>
            <person name="Kaliman A.V."/>
            <person name="Krutilina A.I."/>
            <person name="Kryukov V.M."/>
            <person name="Bayev A.A."/>
        </authorList>
    </citation>
    <scope>NUCLEOTIDE SEQUENCE [GENOMIC DNA]</scope>
</reference>
<reference key="2">
    <citation type="submission" date="2004-01" db="EMBL/GenBank/DDBJ databases">
        <title>Bacteriophage T5 complete genome.</title>
        <authorList>
            <person name="Ksenzenko V.N."/>
            <person name="Kaliman A.V."/>
            <person name="Krutilina A.I."/>
            <person name="Shlyapnikov M.G."/>
        </authorList>
    </citation>
    <scope>NUCLEOTIDE SEQUENCE [LARGE SCALE GENOMIC DNA]</scope>
</reference>
<reference key="3">
    <citation type="journal article" date="2005" name="Virology">
        <title>Complete genome sequence of bacteriophage T5.</title>
        <authorList>
            <person name="Wang J."/>
            <person name="Jiang Y."/>
            <person name="Vincent M."/>
            <person name="Sun Y."/>
            <person name="Yu H."/>
            <person name="Wang J."/>
            <person name="Bao Q."/>
            <person name="Kong H."/>
            <person name="Hu S."/>
        </authorList>
    </citation>
    <scope>NUCLEOTIDE SEQUENCE [LARGE SCALE GENOMIC DNA]</scope>
    <scope>INDUCTION</scope>
    <source>
        <strain evidence="21">ATCC 11303-B5</strain>
    </source>
</reference>
<reference key="4">
    <citation type="journal article" date="2014" name="J. Virol.">
        <title>Insights into bacteriophage T5 structure from analysis of its morphogenesis genes and protein components.</title>
        <authorList>
            <person name="Zivanovic Y."/>
            <person name="Confalonieri F."/>
            <person name="Ponchon L."/>
            <person name="Lurz R."/>
            <person name="Chami M."/>
            <person name="Flayhan A."/>
            <person name="Renouard M."/>
            <person name="Huet A."/>
            <person name="Decottignies P."/>
            <person name="Davidson A.R."/>
            <person name="Breyton C."/>
            <person name="Boulanger P."/>
        </authorList>
    </citation>
    <scope>NUCLEOTIDE SEQUENCE [LARGE SCALE GENOMIC DNA]</scope>
    <source>
        <strain>St0 deletion mutant</strain>
    </source>
</reference>
<reference key="5">
    <citation type="journal article" date="1990" name="J. Biol. Chem.">
        <title>Properties of overexpressed phage T5 D15 exonuclease. Similarities with Escherichia coli DNA polymerase I 5'-3' exonuclease.</title>
        <authorList>
            <person name="Sayers J.R."/>
            <person name="Eckstein F."/>
        </authorList>
    </citation>
    <scope>PROTEIN SEQUENCE OF 2-20</scope>
    <scope>CATALYTIC ACTIVITY</scope>
</reference>
<reference key="6">
    <citation type="journal article" date="1997" name="Nucleic Acids Res.">
        <title>Structure-specific DNA binding by bacteriophage T5 5'--&gt;3' exonuclease.</title>
        <authorList>
            <person name="Garforth S.J."/>
            <person name="Sayers J.R."/>
        </authorList>
    </citation>
    <scope>PROTEIN SEQUENCE OF 18-27</scope>
    <scope>DNA-BINDING</scope>
    <scope>ACTIVITY REGULATION</scope>
    <scope>MUTAGENESIS OF CYS-115</scope>
    <scope>CATALYTIC ACTIVITY</scope>
</reference>
<reference key="7">
    <citation type="journal article" date="1999" name="Nucleic Acids Res.">
        <title>A single cleavage assay for T5 5'--&gt;3' exonuclease: determination of the catalytic parameters for wild-type and mutant proteins.</title>
        <authorList>
            <person name="Pickering T.J."/>
            <person name="Garforth S.J."/>
            <person name="Thorpe S.J."/>
            <person name="Sayers J.R."/>
            <person name="Grasby J.A."/>
        </authorList>
    </citation>
    <scope>MUTAGENESIS OF LYS-83; LYS-196 AND LYS-215</scope>
    <scope>CATALYTIC ACTIVITY</scope>
</reference>
<reference key="8">
    <citation type="journal article" date="1999" name="J. Biol. Chem.">
        <title>Variation in the steady state kinetic parameters of wild type and mutant T5 5'-3'-exonuclease with pH. Protonation of Lys-83 is critical for DNA binding.</title>
        <authorList>
            <person name="Pickering T.J."/>
            <person name="Garforth S."/>
            <person name="Sayers J.R."/>
            <person name="Grasby J.A."/>
        </authorList>
    </citation>
    <scope>FUNCTION</scope>
    <scope>CATALYTIC ACTIVITY</scope>
    <scope>BIOPHYSICOCHEMICAL PROPERTIES</scope>
    <scope>MUTAGENESIS OF LYS-83</scope>
</reference>
<reference key="9">
    <citation type="journal article" date="2002" name="Proc. Natl. Acad. Sci. U.S.A.">
        <title>Interactions of mutant and wild-type flap endonucleases with oligonucleotide substrates suggest an alternative model of DNA binding.</title>
        <authorList>
            <person name="Dervan J.J."/>
            <person name="Feng M."/>
            <person name="Patel D."/>
            <person name="Grasby J.A."/>
            <person name="Artymiuk P.J."/>
            <person name="Ceska T.A."/>
            <person name="Sayers J.R."/>
        </authorList>
    </citation>
    <scope>MUTAGENESIS OF ARG-33; ARG-172; LYS-215; ARG-216 AND LYS-241</scope>
    <scope>DNA-BINDING</scope>
</reference>
<reference key="10">
    <citation type="journal article" date="2002" name="J. Mol. Biol.">
        <title>A conserved tyrosine residue aids ternary complex formation, but not catalysis, in phage T5 flap endonuclease.</title>
        <authorList>
            <person name="Patel D."/>
            <person name="Tock M.R."/>
            <person name="Frary E."/>
            <person name="Feng M."/>
            <person name="Pickering T.J."/>
            <person name="Grasby J.A."/>
            <person name="Sayers J.R."/>
        </authorList>
    </citation>
    <scope>MUTAGENESIS OF TYR-82</scope>
</reference>
<reference key="11">
    <citation type="journal article" date="2003" name="EMBO J.">
        <title>Dynamic evidence for metal ion catalysis in the reaction mediated by a flap endonuclease.</title>
        <authorList>
            <person name="Tock M.R."/>
            <person name="Frary E."/>
            <person name="Sayers J.R."/>
            <person name="Grasby J.A."/>
        </authorList>
    </citation>
    <scope>COFACTOR</scope>
</reference>
<reference key="12">
    <citation type="journal article" date="2007" name="J. Mol. Biol.">
        <title>Comparison of the catalytic parameters and reaction specificities of a phage and an archaeal flap endonuclease.</title>
        <authorList>
            <person name="Williams R."/>
            <person name="Sengerova B."/>
            <person name="Osborne S."/>
            <person name="Syson K."/>
            <person name="Ault S."/>
            <person name="Kilgour A."/>
            <person name="Chapados B.R."/>
            <person name="Tainer J.A."/>
            <person name="Sayers J.R."/>
            <person name="Grasby J.A."/>
        </authorList>
    </citation>
    <scope>CATALYTIC ACTIVITY</scope>
</reference>
<reference key="13">
    <citation type="journal article" date="1996" name="Nature">
        <title>A helical arch allowing single-stranded DNA to thread through T5 5'-exonuclease.</title>
        <authorList>
            <person name="Ceska T.A."/>
            <person name="Sayers J.R."/>
            <person name="Stier G."/>
            <person name="Suck D."/>
        </authorList>
    </citation>
    <scope>X-RAY CRYSTALLOGRAPHY (2.5 ANGSTROMS)</scope>
    <scope>DOMAIN</scope>
</reference>
<reference key="14">
    <citation type="journal article" date="1999" name="Proc. Natl. Acad. Sci. U.S.A.">
        <title>Mutagenesis of conserved lysine residues in bacteriophage T5 5'-3' exonuclease suggests separate mechanisms of endo- and exonucleolytic cleavage.</title>
        <authorList>
            <person name="Garforth S.J."/>
            <person name="Ceska T.A."/>
            <person name="Suck D."/>
            <person name="Sayers J.R."/>
        </authorList>
    </citation>
    <scope>X-RAY CRYSTALLOGRAPHY (2.5 ANGSTROMS) OF MUTANT ALA-83</scope>
    <scope>BIOPHYSICOCHEMICAL PROPERTIES</scope>
    <scope>MUTAGENESIS OF LYS-83; LYS-196 AND LYS-215</scope>
    <scope>FUNCTION</scope>
    <scope>CATALYTIC ACTIVITY</scope>
</reference>
<reference key="15">
    <citation type="journal article" date="2004" name="Nat. Struct. Mol. Biol.">
        <title>Roles of divalent metal ions in flap endonuclease-substrate interactions.</title>
        <authorList>
            <person name="Feng M."/>
            <person name="Patel D."/>
            <person name="Dervan J.J."/>
            <person name="Ceska T."/>
            <person name="Suck D."/>
            <person name="Haq I."/>
            <person name="Sayers J.R."/>
        </authorList>
    </citation>
    <scope>X-RAY CRYSTALLOGRAPHY (2.75 ANGSTROMS) OF 2-290</scope>
    <scope>COFACTOR</scope>
    <scope>MUTAGENESIS OF 128-GLU--ASP-130 AND 201-ASP--ASP-204</scope>
    <scope>FUNCTION</scope>
</reference>
<reference evidence="22 23 24 25" key="16">
    <citation type="journal article" date="2016" name="Nat. Struct. Mol. Biol.">
        <title>Direct observation of DNA threading in flap endonuclease complexes.</title>
        <authorList>
            <person name="AlMalki F.A."/>
            <person name="Flemming C.S."/>
            <person name="Zhang J."/>
            <person name="Feng M."/>
            <person name="Sedelnikova S.E."/>
            <person name="Ceska T."/>
            <person name="Rafferty J.B."/>
            <person name="Sayers J.R."/>
            <person name="Artymiuk P.J."/>
        </authorList>
    </citation>
    <scope>X-RAY CRYSTALLOGRAPHY (1.48 ANGSTROMS) OF 20-291 IN COMPLEX WITH MAGNESIUM</scope>
    <scope>COFACTOR</scope>
    <scope>DOMAIN</scope>
    <scope>MUTAGENESIS OF ASP-153 AND ASP-155</scope>
    <scope>CATALYTIC ACTIVITY</scope>
    <scope>REACTION MECHANISM</scope>
</reference>
<gene>
    <name type="primary">D15</name>
    <name evidence="21" type="synonym">exo5</name>
    <name evidence="19" type="ORF">T5.130</name>
    <name evidence="20" type="ORF">T5p128</name>
</gene>
<protein>
    <recommendedName>
        <fullName evidence="1">Flap endonuclease</fullName>
        <shortName evidence="1">FEN</shortName>
        <ecNumber evidence="1 2 7 9 12">3.1.11.-</ecNumber>
    </recommendedName>
    <alternativeName>
        <fullName evidence="1 15">5'-3' exonuclease</fullName>
    </alternativeName>
    <alternativeName>
        <fullName evidence="1 14">Exodeoxyribonuclease</fullName>
        <ecNumber evidence="1 2 7 8 9 11 12">3.1.11.3</ecNumber>
    </alternativeName>
</protein>
<comment type="function">
    <text evidence="1 2 6 12">Catalyzes both the 5'-exonucleolytic and structure-specific endonucleolytic hydrolysis of DNA branched nucleic acid molecules and probably plays a role in viral genome replication (PubMed:10364212, PubMed:15077103, PubMed:9874768). Active on flap (branched duplex DNA containing a free single-stranded 5'-end), 5'overhangs and pseudo-Y structures (PubMed:10364212, PubMed:15077103, PubMed:9874768). The substrates require a free, single-stranded 5' end, with endonucleolytic hydrolysis occurring at the junction of double- and single-stranded DNA (PubMed:9874768). This function may be used for example to trim such branched molecules generated by Okazaki fragments synthesis during replication.</text>
</comment>
<comment type="catalytic activity">
    <reaction evidence="1 2 7 8 9 11 12 13">
        <text>Exonucleolytic cleavage in the 5'- to 3'-direction to yield nucleoside 5'-phosphates.</text>
        <dbReference type="EC" id="3.1.11.3"/>
    </reaction>
</comment>
<comment type="cofactor">
    <cofactor evidence="1 5 6 9">
        <name>Mg(2+)</name>
        <dbReference type="ChEBI" id="CHEBI:18420"/>
    </cofactor>
    <cofactor evidence="1 9">
        <name>K(+)</name>
        <dbReference type="ChEBI" id="CHEBI:29103"/>
    </cofactor>
    <text evidence="1 5 6 9">Binds divalent metal cations, probably Mg(2+). In vitro low metal concentrations selectively stimulate the endonuclease reaction. Endonuclease activity is suggested to require only the first cation, whereas exonuclease activity is suggested to require binding of both. High pH favors the exonuclease activity whereas low pH favors the endonuclease activity. Metal ions enhance substrate binding.</text>
</comment>
<comment type="activity regulation">
    <text evidence="11">Inhibited by p-hydroxymercuribenzoate (PHMB).</text>
</comment>
<comment type="biophysicochemical properties">
    <phDependence>
        <text evidence="2 12">Optimum pH is 9.3 for the exonuclease activity, 5.5 for endonuclease activity. High pH favors the exonuclease activity whereas low pH favors the endonuclease activity.</text>
    </phDependence>
</comment>
<comment type="induction">
    <text evidence="17">Expressed in the early phase of the viral replicative cycle.</text>
</comment>
<comment type="domain">
    <text evidence="1 9 10">Three alpha-helices form a helical arch which forms a hole in the protein and through which the 5' flap of the scissile ssDNA is threaded.</text>
</comment>
<comment type="sequence caution" evidence="16">
    <conflict type="erroneous initiation">
        <sequence resource="EMBL-CDS" id="AAX12058"/>
    </conflict>
    <text>Truncated N-terminus.</text>
</comment>
<organism>
    <name type="scientific">Escherichia phage T5</name>
    <name type="common">Enterobacteria phage T5</name>
    <dbReference type="NCBI Taxonomy" id="2695836"/>
    <lineage>
        <taxon>Viruses</taxon>
        <taxon>Duplodnaviria</taxon>
        <taxon>Heunggongvirae</taxon>
        <taxon>Uroviricota</taxon>
        <taxon>Caudoviricetes</taxon>
        <taxon>Demerecviridae</taxon>
        <taxon>Markadamsvirinae</taxon>
        <taxon>Tequintavirus</taxon>
        <taxon>Tequintavirus T5</taxon>
    </lineage>
</organism>
<name>FEN_BPT5</name>
<organismHost>
    <name type="scientific">Escherichia coli</name>
    <dbReference type="NCBI Taxonomy" id="562"/>
</organismHost>